<feature type="chain" id="PRO_1000202167" description="Aspartate--tRNA(Asp/Asn) ligase">
    <location>
        <begin position="1"/>
        <end position="602"/>
    </location>
</feature>
<feature type="region of interest" description="Aspartate" evidence="1">
    <location>
        <begin position="200"/>
        <end position="203"/>
    </location>
</feature>
<feature type="binding site" evidence="1">
    <location>
        <position position="176"/>
    </location>
    <ligand>
        <name>L-aspartate</name>
        <dbReference type="ChEBI" id="CHEBI:29991"/>
    </ligand>
</feature>
<feature type="binding site" evidence="1">
    <location>
        <begin position="222"/>
        <end position="224"/>
    </location>
    <ligand>
        <name>ATP</name>
        <dbReference type="ChEBI" id="CHEBI:30616"/>
    </ligand>
</feature>
<feature type="binding site" evidence="1">
    <location>
        <position position="222"/>
    </location>
    <ligand>
        <name>L-aspartate</name>
        <dbReference type="ChEBI" id="CHEBI:29991"/>
    </ligand>
</feature>
<feature type="binding site" evidence="1">
    <location>
        <position position="452"/>
    </location>
    <ligand>
        <name>L-aspartate</name>
        <dbReference type="ChEBI" id="CHEBI:29991"/>
    </ligand>
</feature>
<feature type="binding site" evidence="1">
    <location>
        <position position="490"/>
    </location>
    <ligand>
        <name>ATP</name>
        <dbReference type="ChEBI" id="CHEBI:30616"/>
    </ligand>
</feature>
<feature type="binding site" evidence="1">
    <location>
        <position position="497"/>
    </location>
    <ligand>
        <name>L-aspartate</name>
        <dbReference type="ChEBI" id="CHEBI:29991"/>
    </ligand>
</feature>
<feature type="binding site" evidence="1">
    <location>
        <begin position="542"/>
        <end position="545"/>
    </location>
    <ligand>
        <name>ATP</name>
        <dbReference type="ChEBI" id="CHEBI:30616"/>
    </ligand>
</feature>
<feature type="site" description="Important for tRNA non-discrimination" evidence="1">
    <location>
        <position position="33"/>
    </location>
</feature>
<keyword id="KW-0030">Aminoacyl-tRNA synthetase</keyword>
<keyword id="KW-0067">ATP-binding</keyword>
<keyword id="KW-0963">Cytoplasm</keyword>
<keyword id="KW-0436">Ligase</keyword>
<keyword id="KW-0547">Nucleotide-binding</keyword>
<keyword id="KW-0648">Protein biosynthesis</keyword>
<evidence type="ECO:0000255" key="1">
    <source>
        <dbReference type="HAMAP-Rule" id="MF_00044"/>
    </source>
</evidence>
<comment type="function">
    <text evidence="1">Aspartyl-tRNA synthetase with relaxed tRNA specificity since it is able to aspartylate not only its cognate tRNA(Asp) but also tRNA(Asn). Reaction proceeds in two steps: L-aspartate is first activated by ATP to form Asp-AMP and then transferred to the acceptor end of tRNA(Asp/Asn).</text>
</comment>
<comment type="catalytic activity">
    <reaction evidence="1">
        <text>tRNA(Asx) + L-aspartate + ATP = L-aspartyl-tRNA(Asx) + AMP + diphosphate</text>
        <dbReference type="Rhea" id="RHEA:18349"/>
        <dbReference type="Rhea" id="RHEA-COMP:9710"/>
        <dbReference type="Rhea" id="RHEA-COMP:9711"/>
        <dbReference type="ChEBI" id="CHEBI:29991"/>
        <dbReference type="ChEBI" id="CHEBI:30616"/>
        <dbReference type="ChEBI" id="CHEBI:33019"/>
        <dbReference type="ChEBI" id="CHEBI:78442"/>
        <dbReference type="ChEBI" id="CHEBI:78516"/>
        <dbReference type="ChEBI" id="CHEBI:456215"/>
        <dbReference type="EC" id="6.1.1.23"/>
    </reaction>
</comment>
<comment type="subunit">
    <text evidence="1">Homodimer.</text>
</comment>
<comment type="subcellular location">
    <subcellularLocation>
        <location evidence="1">Cytoplasm</location>
    </subcellularLocation>
</comment>
<comment type="similarity">
    <text evidence="1">Belongs to the class-II aminoacyl-tRNA synthetase family. Type 1 subfamily.</text>
</comment>
<gene>
    <name evidence="1" type="primary">aspS</name>
    <name type="ordered locus">RAF_ORF0176</name>
</gene>
<name>SYDND_RICAE</name>
<organism>
    <name type="scientific">Rickettsia africae (strain ESF-5)</name>
    <dbReference type="NCBI Taxonomy" id="347255"/>
    <lineage>
        <taxon>Bacteria</taxon>
        <taxon>Pseudomonadati</taxon>
        <taxon>Pseudomonadota</taxon>
        <taxon>Alphaproteobacteria</taxon>
        <taxon>Rickettsiales</taxon>
        <taxon>Rickettsiaceae</taxon>
        <taxon>Rickettsieae</taxon>
        <taxon>Rickettsia</taxon>
        <taxon>spotted fever group</taxon>
    </lineage>
</organism>
<accession>C3PMI3</accession>
<reference key="1">
    <citation type="journal article" date="2009" name="BMC Genomics">
        <title>Analysis of the Rickettsia africae genome reveals that virulence acquisition in Rickettsia species may be explained by genome reduction.</title>
        <authorList>
            <person name="Fournier P.-E."/>
            <person name="El Karkouri K."/>
            <person name="Leroy Q."/>
            <person name="Robert C."/>
            <person name="Giumelli B."/>
            <person name="Renesto P."/>
            <person name="Socolovschi C."/>
            <person name="Parola P."/>
            <person name="Audic S."/>
            <person name="Raoult D."/>
        </authorList>
    </citation>
    <scope>NUCLEOTIDE SEQUENCE [LARGE SCALE GENOMIC DNA]</scope>
    <source>
        <strain>ESF-5</strain>
    </source>
</reference>
<protein>
    <recommendedName>
        <fullName evidence="1">Aspartate--tRNA(Asp/Asn) ligase</fullName>
        <ecNumber evidence="1">6.1.1.23</ecNumber>
    </recommendedName>
    <alternativeName>
        <fullName evidence="1">Aspartyl-tRNA synthetase</fullName>
        <shortName evidence="1">AspRS</shortName>
    </alternativeName>
    <alternativeName>
        <fullName evidence="1">Non-discriminating aspartyl-tRNA synthetase</fullName>
        <shortName evidence="1">ND-AspRS</shortName>
    </alternativeName>
</protein>
<proteinExistence type="inferred from homology"/>
<sequence>MHKYRTHNCNELQISDVETEVKLSGWVHRRRDHGNLVFIDLRDHYGITQIVFTDQNPQLMEDASRLRYESVITVRGTVVARSEDTINNTLPTGHVEVLAVEFSVESAADTLPFVINTEKDAPEESRFKHRFLDLRREKLHNNIILRSQIISHIRHLMTASGFTEFQTPILTASSPEGARDFLVPSRMHPGKFYALPQAPQQFKQLLMVSGFDRYFQIAPCFRDEDARADRSPGEFYQLDVEMSFVTQEDVFSTIEPVMYDLFTKFTDKKVSETPFVCIPYNESMLKYGSDKPDLRNPIIIADVTEIFRDSDFTIFRENIKKGSIVRAIPAPKAAALPRSFFDKMIEFAVSEGAGGLGYIQFSETGEAKGPVVKFLSPQQLESLKATASISNGDAVFFASDKKEKAAKLAGKVRIRLGEELDLLEKDCFKFCWITDFPFYELNEETGKIDFSHNPFSMPQGGIDALEQAKTTEELLELTAYQYDIVCNGIELSSGAIRNHKPEIMYKAFSIAGYSEEEVDKRFGGMIRAFKFGAPPHGGIAPGIDRIVMLLAEATNIREIIAFPLNQQAEDLLMNAPSYVEDKALKELSIMLSPSARKNAEKE</sequence>
<dbReference type="EC" id="6.1.1.23" evidence="1"/>
<dbReference type="EMBL" id="CP001612">
    <property type="protein sequence ID" value="ACP53143.1"/>
    <property type="molecule type" value="Genomic_DNA"/>
</dbReference>
<dbReference type="RefSeq" id="WP_012719415.1">
    <property type="nucleotide sequence ID" value="NC_012633.1"/>
</dbReference>
<dbReference type="SMR" id="C3PMI3"/>
<dbReference type="KEGG" id="raf:RAF_ORF0176"/>
<dbReference type="HOGENOM" id="CLU_014330_3_2_5"/>
<dbReference type="Proteomes" id="UP000002305">
    <property type="component" value="Chromosome"/>
</dbReference>
<dbReference type="GO" id="GO:0005737">
    <property type="term" value="C:cytoplasm"/>
    <property type="evidence" value="ECO:0007669"/>
    <property type="project" value="UniProtKB-SubCell"/>
</dbReference>
<dbReference type="GO" id="GO:0004815">
    <property type="term" value="F:aspartate-tRNA ligase activity"/>
    <property type="evidence" value="ECO:0007669"/>
    <property type="project" value="UniProtKB-UniRule"/>
</dbReference>
<dbReference type="GO" id="GO:0050560">
    <property type="term" value="F:aspartate-tRNA(Asn) ligase activity"/>
    <property type="evidence" value="ECO:0007669"/>
    <property type="project" value="UniProtKB-EC"/>
</dbReference>
<dbReference type="GO" id="GO:0005524">
    <property type="term" value="F:ATP binding"/>
    <property type="evidence" value="ECO:0007669"/>
    <property type="project" value="UniProtKB-UniRule"/>
</dbReference>
<dbReference type="GO" id="GO:0003676">
    <property type="term" value="F:nucleic acid binding"/>
    <property type="evidence" value="ECO:0007669"/>
    <property type="project" value="InterPro"/>
</dbReference>
<dbReference type="GO" id="GO:0006422">
    <property type="term" value="P:aspartyl-tRNA aminoacylation"/>
    <property type="evidence" value="ECO:0007669"/>
    <property type="project" value="UniProtKB-UniRule"/>
</dbReference>
<dbReference type="CDD" id="cd00777">
    <property type="entry name" value="AspRS_core"/>
    <property type="match status" value="1"/>
</dbReference>
<dbReference type="CDD" id="cd04317">
    <property type="entry name" value="EcAspRS_like_N"/>
    <property type="match status" value="1"/>
</dbReference>
<dbReference type="Gene3D" id="3.30.930.10">
    <property type="entry name" value="Bira Bifunctional Protein, Domain 2"/>
    <property type="match status" value="1"/>
</dbReference>
<dbReference type="Gene3D" id="3.30.1360.30">
    <property type="entry name" value="GAD-like domain"/>
    <property type="match status" value="1"/>
</dbReference>
<dbReference type="Gene3D" id="2.40.50.140">
    <property type="entry name" value="Nucleic acid-binding proteins"/>
    <property type="match status" value="1"/>
</dbReference>
<dbReference type="HAMAP" id="MF_00044">
    <property type="entry name" value="Asp_tRNA_synth_type1"/>
    <property type="match status" value="1"/>
</dbReference>
<dbReference type="InterPro" id="IPR004364">
    <property type="entry name" value="Aa-tRNA-synt_II"/>
</dbReference>
<dbReference type="InterPro" id="IPR006195">
    <property type="entry name" value="aa-tRNA-synth_II"/>
</dbReference>
<dbReference type="InterPro" id="IPR045864">
    <property type="entry name" value="aa-tRNA-synth_II/BPL/LPL"/>
</dbReference>
<dbReference type="InterPro" id="IPR004524">
    <property type="entry name" value="Asp-tRNA-ligase_1"/>
</dbReference>
<dbReference type="InterPro" id="IPR047089">
    <property type="entry name" value="Asp-tRNA-ligase_1_N"/>
</dbReference>
<dbReference type="InterPro" id="IPR002312">
    <property type="entry name" value="Asp/Asn-tRNA-synth_IIb"/>
</dbReference>
<dbReference type="InterPro" id="IPR047090">
    <property type="entry name" value="AspRS_core"/>
</dbReference>
<dbReference type="InterPro" id="IPR004115">
    <property type="entry name" value="GAD-like_sf"/>
</dbReference>
<dbReference type="InterPro" id="IPR029351">
    <property type="entry name" value="GAD_dom"/>
</dbReference>
<dbReference type="InterPro" id="IPR012340">
    <property type="entry name" value="NA-bd_OB-fold"/>
</dbReference>
<dbReference type="InterPro" id="IPR004365">
    <property type="entry name" value="NA-bd_OB_tRNA"/>
</dbReference>
<dbReference type="NCBIfam" id="TIGR00459">
    <property type="entry name" value="aspS_bact"/>
    <property type="match status" value="1"/>
</dbReference>
<dbReference type="NCBIfam" id="NF001750">
    <property type="entry name" value="PRK00476.1"/>
    <property type="match status" value="1"/>
</dbReference>
<dbReference type="PANTHER" id="PTHR22594:SF5">
    <property type="entry name" value="ASPARTATE--TRNA LIGASE, MITOCHONDRIAL"/>
    <property type="match status" value="1"/>
</dbReference>
<dbReference type="PANTHER" id="PTHR22594">
    <property type="entry name" value="ASPARTYL/LYSYL-TRNA SYNTHETASE"/>
    <property type="match status" value="1"/>
</dbReference>
<dbReference type="Pfam" id="PF02938">
    <property type="entry name" value="GAD"/>
    <property type="match status" value="1"/>
</dbReference>
<dbReference type="Pfam" id="PF00152">
    <property type="entry name" value="tRNA-synt_2"/>
    <property type="match status" value="1"/>
</dbReference>
<dbReference type="Pfam" id="PF01336">
    <property type="entry name" value="tRNA_anti-codon"/>
    <property type="match status" value="1"/>
</dbReference>
<dbReference type="PRINTS" id="PR01042">
    <property type="entry name" value="TRNASYNTHASP"/>
</dbReference>
<dbReference type="SUPFAM" id="SSF55681">
    <property type="entry name" value="Class II aaRS and biotin synthetases"/>
    <property type="match status" value="1"/>
</dbReference>
<dbReference type="SUPFAM" id="SSF55261">
    <property type="entry name" value="GAD domain-like"/>
    <property type="match status" value="1"/>
</dbReference>
<dbReference type="SUPFAM" id="SSF50249">
    <property type="entry name" value="Nucleic acid-binding proteins"/>
    <property type="match status" value="1"/>
</dbReference>
<dbReference type="PROSITE" id="PS50862">
    <property type="entry name" value="AA_TRNA_LIGASE_II"/>
    <property type="match status" value="1"/>
</dbReference>